<proteinExistence type="inferred from homology"/>
<keyword id="KW-0963">Cytoplasm</keyword>
<keyword id="KW-0251">Elongation factor</keyword>
<keyword id="KW-0342">GTP-binding</keyword>
<keyword id="KW-0378">Hydrolase</keyword>
<keyword id="KW-0460">Magnesium</keyword>
<keyword id="KW-0479">Metal-binding</keyword>
<keyword id="KW-0547">Nucleotide-binding</keyword>
<keyword id="KW-0648">Protein biosynthesis</keyword>
<keyword id="KW-1185">Reference proteome</keyword>
<evidence type="ECO:0000250" key="1"/>
<evidence type="ECO:0000255" key="2">
    <source>
        <dbReference type="HAMAP-Rule" id="MF_00118"/>
    </source>
</evidence>
<sequence>MAKGTFERTKPHVNIGTIGHVDHGKTTLTAAITFTAASADPTIETLAYDQIDKAPEEKARGITINTAHVEYQTETRHYSHVDCPGHADYVKNMITGAAQMDGAILVVSSADGPMPQTREHILLARQVGVPYIVVFMNKVDMVDDEELLELVEMEVRELLSKYEFPGDDLPVVKGSALRALEALQSNPKMARGTDKWVDYIWELLDAVDSYIPTPERDTDKTFLMPVEDVFTITGRGTVATGRVERGTVKVQDEVEIVGLTDTRKTTVTGIEMHRKLLDSGMAGDNVGVLLRGVARDDVERGQVLAKPGSIKPHTKFEASVYVLSKDEGGRHSAFFGGYRPQFYFRTTDVTGVVELQEGVEMVMPGDNVTFTVELIKPIAMEEGLRFAIREGGRTVGAGVVSKVLE</sequence>
<comment type="function">
    <text evidence="2">GTP hydrolase that promotes the GTP-dependent binding of aminoacyl-tRNA to the A-site of ribosomes during protein biosynthesis.</text>
</comment>
<comment type="catalytic activity">
    <reaction evidence="2">
        <text>GTP + H2O = GDP + phosphate + H(+)</text>
        <dbReference type="Rhea" id="RHEA:19669"/>
        <dbReference type="ChEBI" id="CHEBI:15377"/>
        <dbReference type="ChEBI" id="CHEBI:15378"/>
        <dbReference type="ChEBI" id="CHEBI:37565"/>
        <dbReference type="ChEBI" id="CHEBI:43474"/>
        <dbReference type="ChEBI" id="CHEBI:58189"/>
        <dbReference type="EC" id="3.6.5.3"/>
    </reaction>
    <physiologicalReaction direction="left-to-right" evidence="2">
        <dbReference type="Rhea" id="RHEA:19670"/>
    </physiologicalReaction>
</comment>
<comment type="subunit">
    <text evidence="2">Monomer.</text>
</comment>
<comment type="subcellular location">
    <subcellularLocation>
        <location evidence="2">Cytoplasm</location>
    </subcellularLocation>
</comment>
<comment type="similarity">
    <text evidence="2">Belongs to the TRAFAC class translation factor GTPase superfamily. Classic translation factor GTPase family. EF-Tu/EF-1A subfamily.</text>
</comment>
<gene>
    <name evidence="2" type="primary">tufA</name>
    <name type="ordered locus">DR_0309</name>
</gene>
<gene>
    <name evidence="2" type="primary">tufB</name>
    <name type="ordered locus">DR_2050</name>
</gene>
<name>EFTU_DEIRA</name>
<dbReference type="EC" id="3.6.5.3" evidence="2"/>
<dbReference type="EMBL" id="AE000513">
    <property type="protein sequence ID" value="AAF09890.1"/>
    <property type="molecule type" value="Genomic_DNA"/>
</dbReference>
<dbReference type="EMBL" id="AE000513">
    <property type="protein sequence ID" value="AAF11600.1"/>
    <property type="molecule type" value="Genomic_DNA"/>
</dbReference>
<dbReference type="PIR" id="E75533">
    <property type="entry name" value="E75533"/>
</dbReference>
<dbReference type="RefSeq" id="NP_294032.1">
    <property type="nucleotide sequence ID" value="NC_001263.1"/>
</dbReference>
<dbReference type="RefSeq" id="NP_295773.1">
    <property type="nucleotide sequence ID" value="NC_001263.1"/>
</dbReference>
<dbReference type="RefSeq" id="WP_010886954.1">
    <property type="nucleotide sequence ID" value="NC_001263.1"/>
</dbReference>
<dbReference type="SMR" id="Q9R342"/>
<dbReference type="FunCoup" id="Q9R342">
    <property type="interactions" value="488"/>
</dbReference>
<dbReference type="STRING" id="243230.DR_0309"/>
<dbReference type="PaxDb" id="243230-DR_0309"/>
<dbReference type="EnsemblBacteria" id="AAF09890">
    <property type="protein sequence ID" value="AAF09890"/>
    <property type="gene ID" value="DR_0309"/>
</dbReference>
<dbReference type="EnsemblBacteria" id="AAF11600">
    <property type="protein sequence ID" value="AAF11600"/>
    <property type="gene ID" value="DR_2050"/>
</dbReference>
<dbReference type="GeneID" id="69516541"/>
<dbReference type="KEGG" id="dra:DR_0309"/>
<dbReference type="KEGG" id="dra:DR_2050"/>
<dbReference type="PATRIC" id="fig|243230.17.peg.2277"/>
<dbReference type="eggNOG" id="COG0050">
    <property type="taxonomic scope" value="Bacteria"/>
</dbReference>
<dbReference type="HOGENOM" id="CLU_007265_0_1_0"/>
<dbReference type="InParanoid" id="Q9R342"/>
<dbReference type="OrthoDB" id="9804504at2"/>
<dbReference type="Proteomes" id="UP000002524">
    <property type="component" value="Chromosome 1"/>
</dbReference>
<dbReference type="GO" id="GO:0005737">
    <property type="term" value="C:cytoplasm"/>
    <property type="evidence" value="ECO:0007669"/>
    <property type="project" value="UniProtKB-SubCell"/>
</dbReference>
<dbReference type="GO" id="GO:0005525">
    <property type="term" value="F:GTP binding"/>
    <property type="evidence" value="ECO:0007669"/>
    <property type="project" value="UniProtKB-UniRule"/>
</dbReference>
<dbReference type="GO" id="GO:0003924">
    <property type="term" value="F:GTPase activity"/>
    <property type="evidence" value="ECO:0007669"/>
    <property type="project" value="InterPro"/>
</dbReference>
<dbReference type="GO" id="GO:0003746">
    <property type="term" value="F:translation elongation factor activity"/>
    <property type="evidence" value="ECO:0000318"/>
    <property type="project" value="GO_Central"/>
</dbReference>
<dbReference type="GO" id="GO:0006414">
    <property type="term" value="P:translational elongation"/>
    <property type="evidence" value="ECO:0000318"/>
    <property type="project" value="GO_Central"/>
</dbReference>
<dbReference type="CDD" id="cd01884">
    <property type="entry name" value="EF_Tu"/>
    <property type="match status" value="1"/>
</dbReference>
<dbReference type="CDD" id="cd03697">
    <property type="entry name" value="EFTU_II"/>
    <property type="match status" value="1"/>
</dbReference>
<dbReference type="CDD" id="cd03707">
    <property type="entry name" value="EFTU_III"/>
    <property type="match status" value="1"/>
</dbReference>
<dbReference type="FunFam" id="2.40.30.10:FF:000001">
    <property type="entry name" value="Elongation factor Tu"/>
    <property type="match status" value="1"/>
</dbReference>
<dbReference type="FunFam" id="3.40.50.300:FF:000003">
    <property type="entry name" value="Elongation factor Tu"/>
    <property type="match status" value="1"/>
</dbReference>
<dbReference type="Gene3D" id="3.40.50.300">
    <property type="entry name" value="P-loop containing nucleotide triphosphate hydrolases"/>
    <property type="match status" value="1"/>
</dbReference>
<dbReference type="Gene3D" id="2.40.30.10">
    <property type="entry name" value="Translation factors"/>
    <property type="match status" value="2"/>
</dbReference>
<dbReference type="HAMAP" id="MF_00118_B">
    <property type="entry name" value="EF_Tu_B"/>
    <property type="match status" value="1"/>
</dbReference>
<dbReference type="InterPro" id="IPR041709">
    <property type="entry name" value="EF-Tu_GTP-bd"/>
</dbReference>
<dbReference type="InterPro" id="IPR050055">
    <property type="entry name" value="EF-Tu_GTPase"/>
</dbReference>
<dbReference type="InterPro" id="IPR004161">
    <property type="entry name" value="EFTu-like_2"/>
</dbReference>
<dbReference type="InterPro" id="IPR033720">
    <property type="entry name" value="EFTU_2"/>
</dbReference>
<dbReference type="InterPro" id="IPR031157">
    <property type="entry name" value="G_TR_CS"/>
</dbReference>
<dbReference type="InterPro" id="IPR027417">
    <property type="entry name" value="P-loop_NTPase"/>
</dbReference>
<dbReference type="InterPro" id="IPR005225">
    <property type="entry name" value="Small_GTP-bd"/>
</dbReference>
<dbReference type="InterPro" id="IPR000795">
    <property type="entry name" value="T_Tr_GTP-bd_dom"/>
</dbReference>
<dbReference type="InterPro" id="IPR009000">
    <property type="entry name" value="Transl_B-barrel_sf"/>
</dbReference>
<dbReference type="InterPro" id="IPR009001">
    <property type="entry name" value="Transl_elong_EF1A/Init_IF2_C"/>
</dbReference>
<dbReference type="InterPro" id="IPR004541">
    <property type="entry name" value="Transl_elong_EFTu/EF1A_bac/org"/>
</dbReference>
<dbReference type="InterPro" id="IPR004160">
    <property type="entry name" value="Transl_elong_EFTu/EF1A_C"/>
</dbReference>
<dbReference type="NCBIfam" id="TIGR00485">
    <property type="entry name" value="EF-Tu"/>
    <property type="match status" value="1"/>
</dbReference>
<dbReference type="NCBIfam" id="NF000766">
    <property type="entry name" value="PRK00049.1"/>
    <property type="match status" value="1"/>
</dbReference>
<dbReference type="NCBIfam" id="NF009372">
    <property type="entry name" value="PRK12735.1"/>
    <property type="match status" value="1"/>
</dbReference>
<dbReference type="NCBIfam" id="NF009373">
    <property type="entry name" value="PRK12736.1"/>
    <property type="match status" value="1"/>
</dbReference>
<dbReference type="NCBIfam" id="TIGR00231">
    <property type="entry name" value="small_GTP"/>
    <property type="match status" value="1"/>
</dbReference>
<dbReference type="PANTHER" id="PTHR43721:SF22">
    <property type="entry name" value="ELONGATION FACTOR TU, MITOCHONDRIAL"/>
    <property type="match status" value="1"/>
</dbReference>
<dbReference type="PANTHER" id="PTHR43721">
    <property type="entry name" value="ELONGATION FACTOR TU-RELATED"/>
    <property type="match status" value="1"/>
</dbReference>
<dbReference type="Pfam" id="PF00009">
    <property type="entry name" value="GTP_EFTU"/>
    <property type="match status" value="1"/>
</dbReference>
<dbReference type="Pfam" id="PF03144">
    <property type="entry name" value="GTP_EFTU_D2"/>
    <property type="match status" value="1"/>
</dbReference>
<dbReference type="Pfam" id="PF03143">
    <property type="entry name" value="GTP_EFTU_D3"/>
    <property type="match status" value="1"/>
</dbReference>
<dbReference type="PRINTS" id="PR00315">
    <property type="entry name" value="ELONGATNFCT"/>
</dbReference>
<dbReference type="SUPFAM" id="SSF50465">
    <property type="entry name" value="EF-Tu/eEF-1alpha/eIF2-gamma C-terminal domain"/>
    <property type="match status" value="1"/>
</dbReference>
<dbReference type="SUPFAM" id="SSF52540">
    <property type="entry name" value="P-loop containing nucleoside triphosphate hydrolases"/>
    <property type="match status" value="1"/>
</dbReference>
<dbReference type="SUPFAM" id="SSF50447">
    <property type="entry name" value="Translation proteins"/>
    <property type="match status" value="1"/>
</dbReference>
<dbReference type="PROSITE" id="PS00301">
    <property type="entry name" value="G_TR_1"/>
    <property type="match status" value="1"/>
</dbReference>
<dbReference type="PROSITE" id="PS51722">
    <property type="entry name" value="G_TR_2"/>
    <property type="match status" value="1"/>
</dbReference>
<reference key="1">
    <citation type="journal article" date="1999" name="Science">
        <title>Genome sequence of the radioresistant bacterium Deinococcus radiodurans R1.</title>
        <authorList>
            <person name="White O."/>
            <person name="Eisen J.A."/>
            <person name="Heidelberg J.F."/>
            <person name="Hickey E.K."/>
            <person name="Peterson J.D."/>
            <person name="Dodson R.J."/>
            <person name="Haft D.H."/>
            <person name="Gwinn M.L."/>
            <person name="Nelson W.C."/>
            <person name="Richardson D.L."/>
            <person name="Moffat K.S."/>
            <person name="Qin H."/>
            <person name="Jiang L."/>
            <person name="Pamphile W."/>
            <person name="Crosby M."/>
            <person name="Shen M."/>
            <person name="Vamathevan J.J."/>
            <person name="Lam P."/>
            <person name="McDonald L.A."/>
            <person name="Utterback T.R."/>
            <person name="Zalewski C."/>
            <person name="Makarova K.S."/>
            <person name="Aravind L."/>
            <person name="Daly M.J."/>
            <person name="Minton K.W."/>
            <person name="Fleischmann R.D."/>
            <person name="Ketchum K.A."/>
            <person name="Nelson K.E."/>
            <person name="Salzberg S.L."/>
            <person name="Smith H.O."/>
            <person name="Venter J.C."/>
            <person name="Fraser C.M."/>
        </authorList>
    </citation>
    <scope>NUCLEOTIDE SEQUENCE [LARGE SCALE GENOMIC DNA]</scope>
    <source>
        <strain>ATCC 13939 / DSM 20539 / JCM 16871 / CCUG 27074 / LMG 4051 / NBRC 15346 / NCIMB 9279 / VKM B-1422 / R1</strain>
    </source>
</reference>
<organism>
    <name type="scientific">Deinococcus radiodurans (strain ATCC 13939 / DSM 20539 / JCM 16871 / CCUG 27074 / LMG 4051 / NBRC 15346 / NCIMB 9279 / VKM B-1422 / R1)</name>
    <dbReference type="NCBI Taxonomy" id="243230"/>
    <lineage>
        <taxon>Bacteria</taxon>
        <taxon>Thermotogati</taxon>
        <taxon>Deinococcota</taxon>
        <taxon>Deinococci</taxon>
        <taxon>Deinococcales</taxon>
        <taxon>Deinococcaceae</taxon>
        <taxon>Deinococcus</taxon>
    </lineage>
</organism>
<feature type="chain" id="PRO_0000091318" description="Elongation factor Tu">
    <location>
        <begin position="1"/>
        <end position="405"/>
    </location>
</feature>
<feature type="domain" description="tr-type G">
    <location>
        <begin position="10"/>
        <end position="215"/>
    </location>
</feature>
<feature type="region of interest" description="G1" evidence="1">
    <location>
        <begin position="19"/>
        <end position="26"/>
    </location>
</feature>
<feature type="region of interest" description="G2" evidence="1">
    <location>
        <begin position="61"/>
        <end position="65"/>
    </location>
</feature>
<feature type="region of interest" description="G3" evidence="1">
    <location>
        <begin position="82"/>
        <end position="85"/>
    </location>
</feature>
<feature type="region of interest" description="G4" evidence="1">
    <location>
        <begin position="137"/>
        <end position="140"/>
    </location>
</feature>
<feature type="region of interest" description="G5" evidence="1">
    <location>
        <begin position="175"/>
        <end position="177"/>
    </location>
</feature>
<feature type="binding site" evidence="2">
    <location>
        <begin position="19"/>
        <end position="26"/>
    </location>
    <ligand>
        <name>GTP</name>
        <dbReference type="ChEBI" id="CHEBI:37565"/>
    </ligand>
</feature>
<feature type="binding site" evidence="2">
    <location>
        <position position="26"/>
    </location>
    <ligand>
        <name>Mg(2+)</name>
        <dbReference type="ChEBI" id="CHEBI:18420"/>
    </ligand>
</feature>
<feature type="binding site" evidence="2">
    <location>
        <begin position="82"/>
        <end position="86"/>
    </location>
    <ligand>
        <name>GTP</name>
        <dbReference type="ChEBI" id="CHEBI:37565"/>
    </ligand>
</feature>
<feature type="binding site" evidence="2">
    <location>
        <begin position="137"/>
        <end position="140"/>
    </location>
    <ligand>
        <name>GTP</name>
        <dbReference type="ChEBI" id="CHEBI:37565"/>
    </ligand>
</feature>
<accession>Q9R342</accession>
<protein>
    <recommendedName>
        <fullName evidence="2">Elongation factor Tu</fullName>
        <shortName evidence="2">EF-Tu</shortName>
        <ecNumber evidence="2">3.6.5.3</ecNumber>
    </recommendedName>
</protein>